<name>MNMA_CUPPJ</name>
<reference key="1">
    <citation type="journal article" date="2010" name="PLoS ONE">
        <title>The complete multipartite genome sequence of Cupriavidus necator JMP134, a versatile pollutant degrader.</title>
        <authorList>
            <person name="Lykidis A."/>
            <person name="Perez-Pantoja D."/>
            <person name="Ledger T."/>
            <person name="Mavromatis K."/>
            <person name="Anderson I.J."/>
            <person name="Ivanova N.N."/>
            <person name="Hooper S.D."/>
            <person name="Lapidus A."/>
            <person name="Lucas S."/>
            <person name="Gonzalez B."/>
            <person name="Kyrpides N.C."/>
        </authorList>
    </citation>
    <scope>NUCLEOTIDE SEQUENCE [LARGE SCALE GENOMIC DNA]</scope>
    <source>
        <strain>JMP134 / LMG 1197</strain>
    </source>
</reference>
<evidence type="ECO:0000255" key="1">
    <source>
        <dbReference type="HAMAP-Rule" id="MF_00144"/>
    </source>
</evidence>
<comment type="function">
    <text evidence="1">Catalyzes the 2-thiolation of uridine at the wobble position (U34) of tRNA, leading to the formation of s(2)U34.</text>
</comment>
<comment type="catalytic activity">
    <reaction evidence="1">
        <text>S-sulfanyl-L-cysteinyl-[protein] + uridine(34) in tRNA + AH2 + ATP = 2-thiouridine(34) in tRNA + L-cysteinyl-[protein] + A + AMP + diphosphate + H(+)</text>
        <dbReference type="Rhea" id="RHEA:47032"/>
        <dbReference type="Rhea" id="RHEA-COMP:10131"/>
        <dbReference type="Rhea" id="RHEA-COMP:11726"/>
        <dbReference type="Rhea" id="RHEA-COMP:11727"/>
        <dbReference type="Rhea" id="RHEA-COMP:11728"/>
        <dbReference type="ChEBI" id="CHEBI:13193"/>
        <dbReference type="ChEBI" id="CHEBI:15378"/>
        <dbReference type="ChEBI" id="CHEBI:17499"/>
        <dbReference type="ChEBI" id="CHEBI:29950"/>
        <dbReference type="ChEBI" id="CHEBI:30616"/>
        <dbReference type="ChEBI" id="CHEBI:33019"/>
        <dbReference type="ChEBI" id="CHEBI:61963"/>
        <dbReference type="ChEBI" id="CHEBI:65315"/>
        <dbReference type="ChEBI" id="CHEBI:87170"/>
        <dbReference type="ChEBI" id="CHEBI:456215"/>
        <dbReference type="EC" id="2.8.1.13"/>
    </reaction>
</comment>
<comment type="subcellular location">
    <subcellularLocation>
        <location evidence="1">Cytoplasm</location>
    </subcellularLocation>
</comment>
<comment type="similarity">
    <text evidence="1">Belongs to the MnmA/TRMU family.</text>
</comment>
<gene>
    <name evidence="1" type="primary">mnmA</name>
    <name type="ordered locus">Reut_A2821</name>
</gene>
<protein>
    <recommendedName>
        <fullName evidence="1">tRNA-specific 2-thiouridylase MnmA</fullName>
        <ecNumber evidence="1">2.8.1.13</ecNumber>
    </recommendedName>
</protein>
<accession>Q46XF1</accession>
<sequence>MSGKRVVVGMSGGVDSSVTAWLLKQQGYEVIGLFMKNWEDDDDSEYCSTRQDWLDVVSVADLIGVDVEAVNFAAEYKDRVFADFLREYSAGRTPNPDVLCNAEIKFKAFLDHAMSLGAETIATGHYARVRQNAAGRFELLKALDHTKDQSYFLHRLNQAQLSRTLFPLGEIPKTRVREIAAEIGLPNAKKKDSTGICFIGERPFRDFLNRYLPTKPGPMKTPDGKVVGEHIGLAFYTLGQRKGIGLGGSREGSGDAWYVARKDMASNTLYVVQGHDHPWLLTPTLVAADLSWVAGEPPLAGASMAAKTRYRQSDAPCVVDAADGDMLKLAFAEAQWAVTPGQSAVLYDGDVCLGGGIIQSAQ</sequence>
<feature type="chain" id="PRO_0000349764" description="tRNA-specific 2-thiouridylase MnmA">
    <location>
        <begin position="1"/>
        <end position="362"/>
    </location>
</feature>
<feature type="region of interest" description="Interaction with target base in tRNA" evidence="1">
    <location>
        <begin position="95"/>
        <end position="97"/>
    </location>
</feature>
<feature type="region of interest" description="Interaction with tRNA" evidence="1">
    <location>
        <begin position="147"/>
        <end position="149"/>
    </location>
</feature>
<feature type="region of interest" description="Interaction with tRNA" evidence="1">
    <location>
        <begin position="309"/>
        <end position="310"/>
    </location>
</feature>
<feature type="active site" description="Nucleophile" evidence="1">
    <location>
        <position position="100"/>
    </location>
</feature>
<feature type="active site" description="Cysteine persulfide intermediate" evidence="1">
    <location>
        <position position="197"/>
    </location>
</feature>
<feature type="binding site" evidence="1">
    <location>
        <begin position="9"/>
        <end position="16"/>
    </location>
    <ligand>
        <name>ATP</name>
        <dbReference type="ChEBI" id="CHEBI:30616"/>
    </ligand>
</feature>
<feature type="binding site" evidence="1">
    <location>
        <position position="35"/>
    </location>
    <ligand>
        <name>ATP</name>
        <dbReference type="ChEBI" id="CHEBI:30616"/>
    </ligand>
</feature>
<feature type="binding site" evidence="1">
    <location>
        <position position="124"/>
    </location>
    <ligand>
        <name>ATP</name>
        <dbReference type="ChEBI" id="CHEBI:30616"/>
    </ligand>
</feature>
<feature type="site" description="Interaction with tRNA" evidence="1">
    <location>
        <position position="125"/>
    </location>
</feature>
<feature type="site" description="Interaction with tRNA" evidence="1">
    <location>
        <position position="342"/>
    </location>
</feature>
<feature type="disulfide bond" description="Alternate" evidence="1">
    <location>
        <begin position="100"/>
        <end position="197"/>
    </location>
</feature>
<keyword id="KW-0067">ATP-binding</keyword>
<keyword id="KW-0963">Cytoplasm</keyword>
<keyword id="KW-1015">Disulfide bond</keyword>
<keyword id="KW-0547">Nucleotide-binding</keyword>
<keyword id="KW-0694">RNA-binding</keyword>
<keyword id="KW-0808">Transferase</keyword>
<keyword id="KW-0819">tRNA processing</keyword>
<keyword id="KW-0820">tRNA-binding</keyword>
<dbReference type="EC" id="2.8.1.13" evidence="1"/>
<dbReference type="EMBL" id="CP000090">
    <property type="protein sequence ID" value="AAZ62182.1"/>
    <property type="molecule type" value="Genomic_DNA"/>
</dbReference>
<dbReference type="SMR" id="Q46XF1"/>
<dbReference type="STRING" id="264198.Reut_A2821"/>
<dbReference type="KEGG" id="reu:Reut_A2821"/>
<dbReference type="eggNOG" id="COG0482">
    <property type="taxonomic scope" value="Bacteria"/>
</dbReference>
<dbReference type="HOGENOM" id="CLU_035188_1_0_4"/>
<dbReference type="OrthoDB" id="9800696at2"/>
<dbReference type="GO" id="GO:0005737">
    <property type="term" value="C:cytoplasm"/>
    <property type="evidence" value="ECO:0007669"/>
    <property type="project" value="UniProtKB-SubCell"/>
</dbReference>
<dbReference type="GO" id="GO:0005524">
    <property type="term" value="F:ATP binding"/>
    <property type="evidence" value="ECO:0007669"/>
    <property type="project" value="UniProtKB-KW"/>
</dbReference>
<dbReference type="GO" id="GO:0000049">
    <property type="term" value="F:tRNA binding"/>
    <property type="evidence" value="ECO:0007669"/>
    <property type="project" value="UniProtKB-KW"/>
</dbReference>
<dbReference type="GO" id="GO:0103016">
    <property type="term" value="F:tRNA-uridine 2-sulfurtransferase activity"/>
    <property type="evidence" value="ECO:0007669"/>
    <property type="project" value="UniProtKB-EC"/>
</dbReference>
<dbReference type="GO" id="GO:0002143">
    <property type="term" value="P:tRNA wobble position uridine thiolation"/>
    <property type="evidence" value="ECO:0007669"/>
    <property type="project" value="TreeGrafter"/>
</dbReference>
<dbReference type="CDD" id="cd01998">
    <property type="entry name" value="MnmA_TRMU-like"/>
    <property type="match status" value="1"/>
</dbReference>
<dbReference type="FunFam" id="2.30.30.280:FF:000001">
    <property type="entry name" value="tRNA-specific 2-thiouridylase MnmA"/>
    <property type="match status" value="1"/>
</dbReference>
<dbReference type="FunFam" id="2.40.30.10:FF:000023">
    <property type="entry name" value="tRNA-specific 2-thiouridylase MnmA"/>
    <property type="match status" value="1"/>
</dbReference>
<dbReference type="FunFam" id="3.40.50.620:FF:000004">
    <property type="entry name" value="tRNA-specific 2-thiouridylase MnmA"/>
    <property type="match status" value="1"/>
</dbReference>
<dbReference type="Gene3D" id="2.30.30.280">
    <property type="entry name" value="Adenine nucleotide alpha hydrolases-like domains"/>
    <property type="match status" value="1"/>
</dbReference>
<dbReference type="Gene3D" id="3.40.50.620">
    <property type="entry name" value="HUPs"/>
    <property type="match status" value="1"/>
</dbReference>
<dbReference type="Gene3D" id="2.40.30.10">
    <property type="entry name" value="Translation factors"/>
    <property type="match status" value="1"/>
</dbReference>
<dbReference type="HAMAP" id="MF_00144">
    <property type="entry name" value="tRNA_thiouridyl_MnmA"/>
    <property type="match status" value="1"/>
</dbReference>
<dbReference type="InterPro" id="IPR004506">
    <property type="entry name" value="MnmA-like"/>
</dbReference>
<dbReference type="InterPro" id="IPR046885">
    <property type="entry name" value="MnmA-like_C"/>
</dbReference>
<dbReference type="InterPro" id="IPR046884">
    <property type="entry name" value="MnmA-like_central"/>
</dbReference>
<dbReference type="InterPro" id="IPR023382">
    <property type="entry name" value="MnmA-like_central_sf"/>
</dbReference>
<dbReference type="InterPro" id="IPR014729">
    <property type="entry name" value="Rossmann-like_a/b/a_fold"/>
</dbReference>
<dbReference type="NCBIfam" id="NF001138">
    <property type="entry name" value="PRK00143.1"/>
    <property type="match status" value="1"/>
</dbReference>
<dbReference type="NCBIfam" id="TIGR00420">
    <property type="entry name" value="trmU"/>
    <property type="match status" value="1"/>
</dbReference>
<dbReference type="PANTHER" id="PTHR11933:SF5">
    <property type="entry name" value="MITOCHONDRIAL TRNA-SPECIFIC 2-THIOURIDYLASE 1"/>
    <property type="match status" value="1"/>
</dbReference>
<dbReference type="PANTHER" id="PTHR11933">
    <property type="entry name" value="TRNA 5-METHYLAMINOMETHYL-2-THIOURIDYLATE -METHYLTRANSFERASE"/>
    <property type="match status" value="1"/>
</dbReference>
<dbReference type="Pfam" id="PF03054">
    <property type="entry name" value="tRNA_Me_trans"/>
    <property type="match status" value="1"/>
</dbReference>
<dbReference type="Pfam" id="PF20258">
    <property type="entry name" value="tRNA_Me_trans_C"/>
    <property type="match status" value="1"/>
</dbReference>
<dbReference type="Pfam" id="PF20259">
    <property type="entry name" value="tRNA_Me_trans_M"/>
    <property type="match status" value="1"/>
</dbReference>
<dbReference type="SUPFAM" id="SSF52402">
    <property type="entry name" value="Adenine nucleotide alpha hydrolases-like"/>
    <property type="match status" value="1"/>
</dbReference>
<proteinExistence type="inferred from homology"/>
<organism>
    <name type="scientific">Cupriavidus pinatubonensis (strain JMP 134 / LMG 1197)</name>
    <name type="common">Cupriavidus necator (strain JMP 134)</name>
    <dbReference type="NCBI Taxonomy" id="264198"/>
    <lineage>
        <taxon>Bacteria</taxon>
        <taxon>Pseudomonadati</taxon>
        <taxon>Pseudomonadota</taxon>
        <taxon>Betaproteobacteria</taxon>
        <taxon>Burkholderiales</taxon>
        <taxon>Burkholderiaceae</taxon>
        <taxon>Cupriavidus</taxon>
    </lineage>
</organism>